<comment type="function">
    <text evidence="1">Responsible for synthesis of pseudouridine from uracil-2605 in 23S ribosomal RNA.</text>
</comment>
<comment type="catalytic activity">
    <reaction>
        <text>uridine(2605) in 23S rRNA = pseudouridine(2605) in 23S rRNA</text>
        <dbReference type="Rhea" id="RHEA:42520"/>
        <dbReference type="Rhea" id="RHEA-COMP:10095"/>
        <dbReference type="Rhea" id="RHEA-COMP:10096"/>
        <dbReference type="ChEBI" id="CHEBI:65314"/>
        <dbReference type="ChEBI" id="CHEBI:65315"/>
        <dbReference type="EC" id="5.4.99.22"/>
    </reaction>
</comment>
<comment type="similarity">
    <text evidence="3">Belongs to the pseudouridine synthase RsuA family.</text>
</comment>
<reference key="1">
    <citation type="journal article" date="1993" name="J. Bacteriol.">
        <title>Molecular cloning and nucleotide sequence of a putative trpDC(F)BA operon in Buchnera aphidicola (endosymbiont of the aphid Schizaphis graminum).</title>
        <authorList>
            <person name="Munson M.A."/>
            <person name="Baumann P."/>
        </authorList>
    </citation>
    <scope>NUCLEOTIDE SEQUENCE [GENOMIC DNA]</scope>
</reference>
<reference key="2">
    <citation type="journal article" date="2002" name="Science">
        <title>50 million years of genomic stasis in endosymbiotic bacteria.</title>
        <authorList>
            <person name="Tamas I."/>
            <person name="Klasson L."/>
            <person name="Canbaeck B."/>
            <person name="Naeslund A.K."/>
            <person name="Eriksson A.-S."/>
            <person name="Wernegreen J.J."/>
            <person name="Sandstroem J.P."/>
            <person name="Moran N.A."/>
            <person name="Andersson S.G.E."/>
        </authorList>
    </citation>
    <scope>NUCLEOTIDE SEQUENCE [LARGE SCALE GENOMIC DNA]</scope>
    <source>
        <strain>Sg</strain>
    </source>
</reference>
<accession>P42395</accession>
<feature type="chain" id="PRO_0000099981" description="Ribosomal large subunit pseudouridine synthase B">
    <location>
        <begin position="1"/>
        <end position="257"/>
    </location>
</feature>
<feature type="domain" description="S4 RNA-binding" evidence="2">
    <location>
        <begin position="3"/>
        <end position="63"/>
    </location>
</feature>
<feature type="active site" description="Nucleophile" evidence="1">
    <location>
        <position position="109"/>
    </location>
</feature>
<feature type="sequence conflict" description="In Ref. 1; CAA79503." evidence="3" ref="1">
    <original>N</original>
    <variation>NN</variation>
    <location>
        <position position="72"/>
    </location>
</feature>
<organism>
    <name type="scientific">Buchnera aphidicola subsp. Schizaphis graminum (strain Sg)</name>
    <dbReference type="NCBI Taxonomy" id="198804"/>
    <lineage>
        <taxon>Bacteria</taxon>
        <taxon>Pseudomonadati</taxon>
        <taxon>Pseudomonadota</taxon>
        <taxon>Gammaproteobacteria</taxon>
        <taxon>Enterobacterales</taxon>
        <taxon>Erwiniaceae</taxon>
        <taxon>Buchnera</taxon>
    </lineage>
</organism>
<proteinExistence type="inferred from homology"/>
<name>RLUB_BUCAP</name>
<protein>
    <recommendedName>
        <fullName>Ribosomal large subunit pseudouridine synthase B</fullName>
        <ecNumber>5.4.99.22</ecNumber>
    </recommendedName>
    <alternativeName>
        <fullName>23S rRNA pseudouridine(2605) synthase</fullName>
    </alternativeName>
    <alternativeName>
        <fullName>rRNA pseudouridylate synthase B</fullName>
    </alternativeName>
    <alternativeName>
        <fullName>rRNA-uridine isomerase B</fullName>
    </alternativeName>
</protein>
<evidence type="ECO:0000250" key="1"/>
<evidence type="ECO:0000255" key="2">
    <source>
        <dbReference type="PROSITE-ProRule" id="PRU00182"/>
    </source>
</evidence>
<evidence type="ECO:0000305" key="3"/>
<sequence>MTAKIQKILSDLGYGSRRFIECMIKCGKISINGEKAIIGQYLNKKNPGEILIDKKKIIVKRNKNLPKVLIYNKPIGEVCTRDDFQKRLTVFDKLPKLNLNRWVSVGRLDINTKGLLLFTNDGTLANKLMHPRSQIEREYNIRIFGEMNKNKINILRKGVKIIHGYVSFKEIVPLYDKKEGKNKWFKGILCEGKNREIRLMFKSIQCQVNQLIRVRYGNIILPKNLKEGQWMMLNSIFLKKLYNLINFDKEIINKKKN</sequence>
<keyword id="KW-0413">Isomerase</keyword>
<keyword id="KW-0694">RNA-binding</keyword>
<keyword id="KW-0698">rRNA processing</keyword>
<gene>
    <name type="primary">rluB</name>
    <name type="ordered locus">BUsg_271</name>
</gene>
<dbReference type="EC" id="5.4.99.22"/>
<dbReference type="EMBL" id="Z19055">
    <property type="protein sequence ID" value="CAA79503.1"/>
    <property type="molecule type" value="Genomic_DNA"/>
</dbReference>
<dbReference type="EMBL" id="AE013218">
    <property type="protein sequence ID" value="AAM67829.1"/>
    <property type="molecule type" value="Genomic_DNA"/>
</dbReference>
<dbReference type="PIR" id="S36431">
    <property type="entry name" value="S36431"/>
</dbReference>
<dbReference type="RefSeq" id="WP_011053796.1">
    <property type="nucleotide sequence ID" value="NC_004061.1"/>
</dbReference>
<dbReference type="SMR" id="P42395"/>
<dbReference type="STRING" id="198804.BUsg_271"/>
<dbReference type="GeneID" id="93003741"/>
<dbReference type="KEGG" id="bas:BUsg_271"/>
<dbReference type="eggNOG" id="COG1187">
    <property type="taxonomic scope" value="Bacteria"/>
</dbReference>
<dbReference type="HOGENOM" id="CLU_024979_1_1_6"/>
<dbReference type="Proteomes" id="UP000000416">
    <property type="component" value="Chromosome"/>
</dbReference>
<dbReference type="GO" id="GO:0160139">
    <property type="term" value="F:23S rRNA pseudouridine(2605) synthase activity"/>
    <property type="evidence" value="ECO:0007669"/>
    <property type="project" value="UniProtKB-EC"/>
</dbReference>
<dbReference type="GO" id="GO:0003723">
    <property type="term" value="F:RNA binding"/>
    <property type="evidence" value="ECO:0007669"/>
    <property type="project" value="UniProtKB-KW"/>
</dbReference>
<dbReference type="GO" id="GO:0000455">
    <property type="term" value="P:enzyme-directed rRNA pseudouridine synthesis"/>
    <property type="evidence" value="ECO:0007669"/>
    <property type="project" value="UniProtKB-ARBA"/>
</dbReference>
<dbReference type="CDD" id="cd02556">
    <property type="entry name" value="PseudoU_synth_RluB"/>
    <property type="match status" value="1"/>
</dbReference>
<dbReference type="CDD" id="cd00165">
    <property type="entry name" value="S4"/>
    <property type="match status" value="1"/>
</dbReference>
<dbReference type="FunFam" id="3.30.70.580:FF:000009">
    <property type="entry name" value="Pseudouridine synthase"/>
    <property type="match status" value="1"/>
</dbReference>
<dbReference type="Gene3D" id="3.30.70.1560">
    <property type="entry name" value="Alpha-L RNA-binding motif"/>
    <property type="match status" value="1"/>
</dbReference>
<dbReference type="Gene3D" id="3.30.70.580">
    <property type="entry name" value="Pseudouridine synthase I, catalytic domain, N-terminal subdomain"/>
    <property type="match status" value="1"/>
</dbReference>
<dbReference type="Gene3D" id="3.10.290.10">
    <property type="entry name" value="RNA-binding S4 domain"/>
    <property type="match status" value="1"/>
</dbReference>
<dbReference type="InterPro" id="IPR042092">
    <property type="entry name" value="PsdUridine_s_RsuA/RluB/E/F_cat"/>
</dbReference>
<dbReference type="InterPro" id="IPR020103">
    <property type="entry name" value="PsdUridine_synth_cat_dom_sf"/>
</dbReference>
<dbReference type="InterPro" id="IPR006145">
    <property type="entry name" value="PsdUridine_synth_RsuA/RluA"/>
</dbReference>
<dbReference type="InterPro" id="IPR000748">
    <property type="entry name" value="PsdUridine_synth_RsuA/RluB/E/F"/>
</dbReference>
<dbReference type="InterPro" id="IPR018496">
    <property type="entry name" value="PsdUridine_synth_RsuA/RluB_CS"/>
</dbReference>
<dbReference type="InterPro" id="IPR050343">
    <property type="entry name" value="RsuA_PseudoU_synthase"/>
</dbReference>
<dbReference type="InterPro" id="IPR002942">
    <property type="entry name" value="S4_RNA-bd"/>
</dbReference>
<dbReference type="InterPro" id="IPR036986">
    <property type="entry name" value="S4_RNA-bd_sf"/>
</dbReference>
<dbReference type="InterPro" id="IPR020094">
    <property type="entry name" value="TruA/RsuA/RluB/E/F_N"/>
</dbReference>
<dbReference type="NCBIfam" id="TIGR00093">
    <property type="entry name" value="pseudouridine synthase"/>
    <property type="match status" value="1"/>
</dbReference>
<dbReference type="PANTHER" id="PTHR47683">
    <property type="entry name" value="PSEUDOURIDINE SYNTHASE FAMILY PROTEIN-RELATED"/>
    <property type="match status" value="1"/>
</dbReference>
<dbReference type="PANTHER" id="PTHR47683:SF3">
    <property type="entry name" value="RIBOSOMAL LARGE SUBUNIT PSEUDOURIDINE SYNTHASE B"/>
    <property type="match status" value="1"/>
</dbReference>
<dbReference type="Pfam" id="PF00849">
    <property type="entry name" value="PseudoU_synth_2"/>
    <property type="match status" value="1"/>
</dbReference>
<dbReference type="SMART" id="SM00363">
    <property type="entry name" value="S4"/>
    <property type="match status" value="1"/>
</dbReference>
<dbReference type="SUPFAM" id="SSF55174">
    <property type="entry name" value="Alpha-L RNA-binding motif"/>
    <property type="match status" value="1"/>
</dbReference>
<dbReference type="SUPFAM" id="SSF55120">
    <property type="entry name" value="Pseudouridine synthase"/>
    <property type="match status" value="1"/>
</dbReference>
<dbReference type="PROSITE" id="PS01149">
    <property type="entry name" value="PSI_RSU"/>
    <property type="match status" value="1"/>
</dbReference>
<dbReference type="PROSITE" id="PS50889">
    <property type="entry name" value="S4"/>
    <property type="match status" value="1"/>
</dbReference>